<keyword id="KW-0067">ATP-binding</keyword>
<keyword id="KW-0963">Cytoplasm</keyword>
<keyword id="KW-0275">Fatty acid biosynthesis</keyword>
<keyword id="KW-0276">Fatty acid metabolism</keyword>
<keyword id="KW-0444">Lipid biosynthesis</keyword>
<keyword id="KW-0443">Lipid metabolism</keyword>
<keyword id="KW-0479">Metal-binding</keyword>
<keyword id="KW-0547">Nucleotide-binding</keyword>
<keyword id="KW-0808">Transferase</keyword>
<keyword id="KW-0862">Zinc</keyword>
<keyword id="KW-0863">Zinc-finger</keyword>
<feature type="chain" id="PRO_0000359053" description="Acetyl-coenzyme A carboxylase carboxyl transferase subunit beta">
    <location>
        <begin position="1"/>
        <end position="304"/>
    </location>
</feature>
<feature type="domain" description="CoA carboxyltransferase N-terminal" evidence="2">
    <location>
        <begin position="23"/>
        <end position="292"/>
    </location>
</feature>
<feature type="zinc finger region" description="C4-type" evidence="1">
    <location>
        <begin position="27"/>
        <end position="49"/>
    </location>
</feature>
<feature type="region of interest" description="Disordered" evidence="3">
    <location>
        <begin position="283"/>
        <end position="304"/>
    </location>
</feature>
<feature type="binding site" evidence="1">
    <location>
        <position position="27"/>
    </location>
    <ligand>
        <name>Zn(2+)</name>
        <dbReference type="ChEBI" id="CHEBI:29105"/>
    </ligand>
</feature>
<feature type="binding site" evidence="1">
    <location>
        <position position="30"/>
    </location>
    <ligand>
        <name>Zn(2+)</name>
        <dbReference type="ChEBI" id="CHEBI:29105"/>
    </ligand>
</feature>
<feature type="binding site" evidence="1">
    <location>
        <position position="46"/>
    </location>
    <ligand>
        <name>Zn(2+)</name>
        <dbReference type="ChEBI" id="CHEBI:29105"/>
    </ligand>
</feature>
<feature type="binding site" evidence="1">
    <location>
        <position position="49"/>
    </location>
    <ligand>
        <name>Zn(2+)</name>
        <dbReference type="ChEBI" id="CHEBI:29105"/>
    </ligand>
</feature>
<gene>
    <name evidence="1" type="primary">accD</name>
    <name type="ordered locus">SG2396</name>
</gene>
<accession>B5RCJ1</accession>
<organism>
    <name type="scientific">Salmonella gallinarum (strain 287/91 / NCTC 13346)</name>
    <dbReference type="NCBI Taxonomy" id="550538"/>
    <lineage>
        <taxon>Bacteria</taxon>
        <taxon>Pseudomonadati</taxon>
        <taxon>Pseudomonadota</taxon>
        <taxon>Gammaproteobacteria</taxon>
        <taxon>Enterobacterales</taxon>
        <taxon>Enterobacteriaceae</taxon>
        <taxon>Salmonella</taxon>
    </lineage>
</organism>
<dbReference type="EC" id="2.1.3.15" evidence="1"/>
<dbReference type="EMBL" id="AM933173">
    <property type="protein sequence ID" value="CAR38225.1"/>
    <property type="molecule type" value="Genomic_DNA"/>
</dbReference>
<dbReference type="RefSeq" id="WP_000118383.1">
    <property type="nucleotide sequence ID" value="NC_011274.1"/>
</dbReference>
<dbReference type="SMR" id="B5RCJ1"/>
<dbReference type="KEGG" id="seg:SG2396"/>
<dbReference type="HOGENOM" id="CLU_015486_1_0_6"/>
<dbReference type="UniPathway" id="UPA00655">
    <property type="reaction ID" value="UER00711"/>
</dbReference>
<dbReference type="Proteomes" id="UP000008321">
    <property type="component" value="Chromosome"/>
</dbReference>
<dbReference type="GO" id="GO:0009329">
    <property type="term" value="C:acetate CoA-transferase complex"/>
    <property type="evidence" value="ECO:0007669"/>
    <property type="project" value="TreeGrafter"/>
</dbReference>
<dbReference type="GO" id="GO:0003989">
    <property type="term" value="F:acetyl-CoA carboxylase activity"/>
    <property type="evidence" value="ECO:0007669"/>
    <property type="project" value="InterPro"/>
</dbReference>
<dbReference type="GO" id="GO:0005524">
    <property type="term" value="F:ATP binding"/>
    <property type="evidence" value="ECO:0007669"/>
    <property type="project" value="UniProtKB-KW"/>
</dbReference>
<dbReference type="GO" id="GO:0016743">
    <property type="term" value="F:carboxyl- or carbamoyltransferase activity"/>
    <property type="evidence" value="ECO:0007669"/>
    <property type="project" value="UniProtKB-UniRule"/>
</dbReference>
<dbReference type="GO" id="GO:0008270">
    <property type="term" value="F:zinc ion binding"/>
    <property type="evidence" value="ECO:0007669"/>
    <property type="project" value="UniProtKB-UniRule"/>
</dbReference>
<dbReference type="GO" id="GO:0006633">
    <property type="term" value="P:fatty acid biosynthetic process"/>
    <property type="evidence" value="ECO:0007669"/>
    <property type="project" value="UniProtKB-KW"/>
</dbReference>
<dbReference type="GO" id="GO:2001295">
    <property type="term" value="P:malonyl-CoA biosynthetic process"/>
    <property type="evidence" value="ECO:0007669"/>
    <property type="project" value="UniProtKB-UniRule"/>
</dbReference>
<dbReference type="FunFam" id="3.90.226.10:FF:000013">
    <property type="entry name" value="Acetyl-coenzyme A carboxylase carboxyl transferase subunit beta"/>
    <property type="match status" value="1"/>
</dbReference>
<dbReference type="Gene3D" id="3.90.226.10">
    <property type="entry name" value="2-enoyl-CoA Hydratase, Chain A, domain 1"/>
    <property type="match status" value="1"/>
</dbReference>
<dbReference type="HAMAP" id="MF_01395">
    <property type="entry name" value="AcetylCoA_CT_beta"/>
    <property type="match status" value="1"/>
</dbReference>
<dbReference type="InterPro" id="IPR034733">
    <property type="entry name" value="AcCoA_carboxyl_beta"/>
</dbReference>
<dbReference type="InterPro" id="IPR000438">
    <property type="entry name" value="Acetyl_CoA_COase_Trfase_b_su"/>
</dbReference>
<dbReference type="InterPro" id="IPR029045">
    <property type="entry name" value="ClpP/crotonase-like_dom_sf"/>
</dbReference>
<dbReference type="InterPro" id="IPR011762">
    <property type="entry name" value="COA_CT_N"/>
</dbReference>
<dbReference type="InterPro" id="IPR041010">
    <property type="entry name" value="Znf-ACC"/>
</dbReference>
<dbReference type="NCBIfam" id="TIGR00515">
    <property type="entry name" value="accD"/>
    <property type="match status" value="1"/>
</dbReference>
<dbReference type="PANTHER" id="PTHR42995">
    <property type="entry name" value="ACETYL-COENZYME A CARBOXYLASE CARBOXYL TRANSFERASE SUBUNIT BETA, CHLOROPLASTIC"/>
    <property type="match status" value="1"/>
</dbReference>
<dbReference type="PANTHER" id="PTHR42995:SF5">
    <property type="entry name" value="ACETYL-COENZYME A CARBOXYLASE CARBOXYL TRANSFERASE SUBUNIT BETA, CHLOROPLASTIC"/>
    <property type="match status" value="1"/>
</dbReference>
<dbReference type="Pfam" id="PF01039">
    <property type="entry name" value="Carboxyl_trans"/>
    <property type="match status" value="1"/>
</dbReference>
<dbReference type="Pfam" id="PF17848">
    <property type="entry name" value="Zn_ribbon_ACC"/>
    <property type="match status" value="1"/>
</dbReference>
<dbReference type="PRINTS" id="PR01070">
    <property type="entry name" value="ACCCTRFRASEB"/>
</dbReference>
<dbReference type="SUPFAM" id="SSF52096">
    <property type="entry name" value="ClpP/crotonase"/>
    <property type="match status" value="1"/>
</dbReference>
<dbReference type="PROSITE" id="PS50980">
    <property type="entry name" value="COA_CT_NTER"/>
    <property type="match status" value="1"/>
</dbReference>
<comment type="function">
    <text evidence="1">Component of the acetyl coenzyme A carboxylase (ACC) complex. Biotin carboxylase (BC) catalyzes the carboxylation of biotin on its carrier protein (BCCP) and then the CO(2) group is transferred by the transcarboxylase to acetyl-CoA to form malonyl-CoA.</text>
</comment>
<comment type="catalytic activity">
    <reaction evidence="1">
        <text>N(6)-carboxybiotinyl-L-lysyl-[protein] + acetyl-CoA = N(6)-biotinyl-L-lysyl-[protein] + malonyl-CoA</text>
        <dbReference type="Rhea" id="RHEA:54728"/>
        <dbReference type="Rhea" id="RHEA-COMP:10505"/>
        <dbReference type="Rhea" id="RHEA-COMP:10506"/>
        <dbReference type="ChEBI" id="CHEBI:57288"/>
        <dbReference type="ChEBI" id="CHEBI:57384"/>
        <dbReference type="ChEBI" id="CHEBI:83144"/>
        <dbReference type="ChEBI" id="CHEBI:83145"/>
        <dbReference type="EC" id="2.1.3.15"/>
    </reaction>
</comment>
<comment type="cofactor">
    <cofactor evidence="1">
        <name>Zn(2+)</name>
        <dbReference type="ChEBI" id="CHEBI:29105"/>
    </cofactor>
    <text evidence="1">Binds 1 zinc ion per subunit.</text>
</comment>
<comment type="pathway">
    <text evidence="1">Lipid metabolism; malonyl-CoA biosynthesis; malonyl-CoA from acetyl-CoA: step 1/1.</text>
</comment>
<comment type="subunit">
    <text evidence="1">Acetyl-CoA carboxylase is a heterohexamer composed of biotin carboxyl carrier protein (AccB), biotin carboxylase (AccC) and two subunits each of ACCase subunit alpha (AccA) and ACCase subunit beta (AccD).</text>
</comment>
<comment type="subcellular location">
    <subcellularLocation>
        <location evidence="1">Cytoplasm</location>
    </subcellularLocation>
</comment>
<comment type="similarity">
    <text evidence="1">Belongs to the AccD/PCCB family.</text>
</comment>
<proteinExistence type="inferred from homology"/>
<sequence>MSWIERIKSNITPTRKASIPEGVWTKCDSCGQVLYRAELERNLEVCPKCDHHMRMSARNRLHSLLDEGSLVELGSELEPKDVLKFRDSKKYKDRLASAQKETGEKDALVVMKGTLHGMPVVAAAFEFAFMGGSMGSVVGARFVRAVEQALEDNCPLVCFSASGGARMQEALMSLMQMAKTSAALAKMQERGLPYISVLTDPTMGGVSASFAMLGDLNIAEPKALIGFAGPRVIEQTVREKLPPGFQRSEFLIEKGAIDMIVRRPEMRLKLASILAKLMNLPAPNPDAPREGVVVPPAPDQESEA</sequence>
<reference key="1">
    <citation type="journal article" date="2008" name="Genome Res.">
        <title>Comparative genome analysis of Salmonella enteritidis PT4 and Salmonella gallinarum 287/91 provides insights into evolutionary and host adaptation pathways.</title>
        <authorList>
            <person name="Thomson N.R."/>
            <person name="Clayton D.J."/>
            <person name="Windhorst D."/>
            <person name="Vernikos G."/>
            <person name="Davidson S."/>
            <person name="Churcher C."/>
            <person name="Quail M.A."/>
            <person name="Stevens M."/>
            <person name="Jones M.A."/>
            <person name="Watson M."/>
            <person name="Barron A."/>
            <person name="Layton A."/>
            <person name="Pickard D."/>
            <person name="Kingsley R.A."/>
            <person name="Bignell A."/>
            <person name="Clark L."/>
            <person name="Harris B."/>
            <person name="Ormond D."/>
            <person name="Abdellah Z."/>
            <person name="Brooks K."/>
            <person name="Cherevach I."/>
            <person name="Chillingworth T."/>
            <person name="Woodward J."/>
            <person name="Norberczak H."/>
            <person name="Lord A."/>
            <person name="Arrowsmith C."/>
            <person name="Jagels K."/>
            <person name="Moule S."/>
            <person name="Mungall K."/>
            <person name="Saunders M."/>
            <person name="Whitehead S."/>
            <person name="Chabalgoity J.A."/>
            <person name="Maskell D."/>
            <person name="Humphreys T."/>
            <person name="Roberts M."/>
            <person name="Barrow P.A."/>
            <person name="Dougan G."/>
            <person name="Parkhill J."/>
        </authorList>
    </citation>
    <scope>NUCLEOTIDE SEQUENCE [LARGE SCALE GENOMIC DNA]</scope>
    <source>
        <strain>287/91 / NCTC 13346</strain>
    </source>
</reference>
<name>ACCD_SALG2</name>
<evidence type="ECO:0000255" key="1">
    <source>
        <dbReference type="HAMAP-Rule" id="MF_01395"/>
    </source>
</evidence>
<evidence type="ECO:0000255" key="2">
    <source>
        <dbReference type="PROSITE-ProRule" id="PRU01136"/>
    </source>
</evidence>
<evidence type="ECO:0000256" key="3">
    <source>
        <dbReference type="SAM" id="MobiDB-lite"/>
    </source>
</evidence>
<protein>
    <recommendedName>
        <fullName evidence="1">Acetyl-coenzyme A carboxylase carboxyl transferase subunit beta</fullName>
        <shortName evidence="1">ACCase subunit beta</shortName>
        <shortName evidence="1">Acetyl-CoA carboxylase carboxyltransferase subunit beta</shortName>
        <ecNumber evidence="1">2.1.3.15</ecNumber>
    </recommendedName>
</protein>